<feature type="chain" id="PRO_0000324192" description="Nuclear pore complex protein Nup85">
    <location>
        <begin position="1"/>
        <end position="649"/>
    </location>
</feature>
<proteinExistence type="evidence at transcript level"/>
<sequence length="649" mass="74148">MEELDVEPSTTLVPAAGVLQKHLGFEWGPGDLLVYETNYKLRGSSSAGSPLVHVVRKDEDICSPILRKLFNESHLIFMGLQKIKEDAPSKNKKTQFVSISRNYRSVIRACMEELQQNAVTAQDGSLASQYGDQVSILLAIELIWNLCEVLFIEAAPAGSLLLHLLNWVRLHKSDVDTRAREVLQSENPTQHPAYWDVVTSLVLQGRMDEARQILSKQASLRMESSSVFKRMDTLLQTMPIFNPAGAQTLTEFDVKWRHWHEECDRCLQDHTFASSAELETLCKILLGDEDVILEQKDLMSTWYHFLVSRLLFTHPTIKPPDLHYYAQSSMNMFLGPRATPEPLDIILLSAFEFDLHQVIKDCSIALNNWWFVAHLTDLLDHCKLLQSHNLHFGSNLREFLVLEYASGLFTHHSLWQLAVDYLDHCPEFGRVYLELQIERVPLDTERKANKVLRICEDRQMSEQVRSICKIMAKRALRNNRLGSALSWSIRAKDAALATLISERFLQDYSNKGSFTDLDVLDNLGPAMLLSDRLTFLGKYREFHRLYGENRFSDAAKLLLSLMMAKIAPRSLWMTLLTDALPLLEQEEVIFTVDQTYELMSCLEELNSGTKDSNQMEQEEDLESTKTELLRVALARNLATAIVKEGTIET</sequence>
<accession>Q6DBY0</accession>
<keyword id="KW-0472">Membrane</keyword>
<keyword id="KW-0509">mRNA transport</keyword>
<keyword id="KW-0906">Nuclear pore complex</keyword>
<keyword id="KW-0539">Nucleus</keyword>
<keyword id="KW-0653">Protein transport</keyword>
<keyword id="KW-1185">Reference proteome</keyword>
<keyword id="KW-0811">Translocation</keyword>
<keyword id="KW-0813">Transport</keyword>
<comment type="function">
    <text evidence="2 3">Component of the nuclear pore complex (NPC) that seems to be required for NPC assembly and maintenance (By similarity). Involved in nephrogenesis (By similarity).</text>
</comment>
<comment type="subunit">
    <text evidence="1">Component of the nuclear pore complex (NPC).</text>
</comment>
<comment type="subcellular location">
    <subcellularLocation>
        <location evidence="3">Nucleus</location>
        <location evidence="3">Nuclear pore complex</location>
    </subcellularLocation>
    <subcellularLocation>
        <location evidence="3">Nucleus membrane</location>
    </subcellularLocation>
</comment>
<comment type="similarity">
    <text evidence="4">Belongs to the nucleoporin Nup85 family.</text>
</comment>
<protein>
    <recommendedName>
        <fullName>Nuclear pore complex protein Nup85</fullName>
    </recommendedName>
    <alternativeName>
        <fullName>85 kDa nucleoporin</fullName>
    </alternativeName>
    <alternativeName>
        <fullName>Nucleoporin Nup85</fullName>
    </alternativeName>
    <alternativeName>
        <fullName>Pericentrin-1</fullName>
    </alternativeName>
</protein>
<dbReference type="EMBL" id="BC078318">
    <property type="protein sequence ID" value="AAH78318.1"/>
    <property type="molecule type" value="mRNA"/>
</dbReference>
<dbReference type="RefSeq" id="NP_001003625.1">
    <property type="nucleotide sequence ID" value="NM_001003625.1"/>
</dbReference>
<dbReference type="SMR" id="Q6DBY0"/>
<dbReference type="FunCoup" id="Q6DBY0">
    <property type="interactions" value="2739"/>
</dbReference>
<dbReference type="STRING" id="7955.ENSDARP00000131114"/>
<dbReference type="PaxDb" id="7955-ENSDARP00000067719"/>
<dbReference type="GeneID" id="445231"/>
<dbReference type="KEGG" id="dre:445231"/>
<dbReference type="AGR" id="ZFIN:ZDB-GENE-040801-145"/>
<dbReference type="CTD" id="79902"/>
<dbReference type="ZFIN" id="ZDB-GENE-040801-145">
    <property type="gene designation" value="nup85"/>
</dbReference>
<dbReference type="eggNOG" id="KOG2271">
    <property type="taxonomic scope" value="Eukaryota"/>
</dbReference>
<dbReference type="InParanoid" id="Q6DBY0"/>
<dbReference type="OrthoDB" id="17644at2759"/>
<dbReference type="PhylomeDB" id="Q6DBY0"/>
<dbReference type="PRO" id="PR:Q6DBY0"/>
<dbReference type="Proteomes" id="UP000000437">
    <property type="component" value="Chromosome 3"/>
</dbReference>
<dbReference type="GO" id="GO:0031965">
    <property type="term" value="C:nuclear membrane"/>
    <property type="evidence" value="ECO:0007669"/>
    <property type="project" value="UniProtKB-SubCell"/>
</dbReference>
<dbReference type="GO" id="GO:0031080">
    <property type="term" value="C:nuclear pore outer ring"/>
    <property type="evidence" value="ECO:0000250"/>
    <property type="project" value="UniProtKB"/>
</dbReference>
<dbReference type="GO" id="GO:0017056">
    <property type="term" value="F:structural constituent of nuclear pore"/>
    <property type="evidence" value="ECO:0000318"/>
    <property type="project" value="GO_Central"/>
</dbReference>
<dbReference type="GO" id="GO:0006406">
    <property type="term" value="P:mRNA export from nucleus"/>
    <property type="evidence" value="ECO:0000318"/>
    <property type="project" value="GO_Central"/>
</dbReference>
<dbReference type="GO" id="GO:0072006">
    <property type="term" value="P:nephron development"/>
    <property type="evidence" value="ECO:0000250"/>
    <property type="project" value="UniProtKB"/>
</dbReference>
<dbReference type="GO" id="GO:0045893">
    <property type="term" value="P:positive regulation of DNA-templated transcription"/>
    <property type="evidence" value="ECO:0000318"/>
    <property type="project" value="GO_Central"/>
</dbReference>
<dbReference type="GO" id="GO:0006606">
    <property type="term" value="P:protein import into nucleus"/>
    <property type="evidence" value="ECO:0000318"/>
    <property type="project" value="GO_Central"/>
</dbReference>
<dbReference type="InterPro" id="IPR011502">
    <property type="entry name" value="Nucleoporin_Nup85"/>
</dbReference>
<dbReference type="PANTHER" id="PTHR13373">
    <property type="entry name" value="FROUNT PROTEIN-RELATED"/>
    <property type="match status" value="1"/>
</dbReference>
<dbReference type="PANTHER" id="PTHR13373:SF21">
    <property type="entry name" value="NUCLEAR PORE COMPLEX PROTEIN NUP85"/>
    <property type="match status" value="1"/>
</dbReference>
<dbReference type="Pfam" id="PF07575">
    <property type="entry name" value="Nucleopor_Nup85"/>
    <property type="match status" value="1"/>
</dbReference>
<name>NUP85_DANRE</name>
<organism>
    <name type="scientific">Danio rerio</name>
    <name type="common">Zebrafish</name>
    <name type="synonym">Brachydanio rerio</name>
    <dbReference type="NCBI Taxonomy" id="7955"/>
    <lineage>
        <taxon>Eukaryota</taxon>
        <taxon>Metazoa</taxon>
        <taxon>Chordata</taxon>
        <taxon>Craniata</taxon>
        <taxon>Vertebrata</taxon>
        <taxon>Euteleostomi</taxon>
        <taxon>Actinopterygii</taxon>
        <taxon>Neopterygii</taxon>
        <taxon>Teleostei</taxon>
        <taxon>Ostariophysi</taxon>
        <taxon>Cypriniformes</taxon>
        <taxon>Danionidae</taxon>
        <taxon>Danioninae</taxon>
        <taxon>Danio</taxon>
    </lineage>
</organism>
<evidence type="ECO:0000250" key="1"/>
<evidence type="ECO:0000250" key="2">
    <source>
        <dbReference type="UniProtKB" id="Q6DK84"/>
    </source>
</evidence>
<evidence type="ECO:0000250" key="3">
    <source>
        <dbReference type="UniProtKB" id="Q9BW27"/>
    </source>
</evidence>
<evidence type="ECO:0000305" key="4"/>
<reference key="1">
    <citation type="submission" date="2004-07" db="EMBL/GenBank/DDBJ databases">
        <authorList>
            <consortium name="NIH - Zebrafish Gene Collection (ZGC) project"/>
        </authorList>
    </citation>
    <scope>NUCLEOTIDE SEQUENCE [LARGE SCALE MRNA]</scope>
    <source>
        <tissue>Embryo</tissue>
    </source>
</reference>
<gene>
    <name type="primary">nup85</name>
    <name type="synonym">pcnt1</name>
    <name type="ORF">zgc:100943</name>
</gene>